<name>LIVF_SALTI</name>
<organism>
    <name type="scientific">Salmonella typhi</name>
    <dbReference type="NCBI Taxonomy" id="90370"/>
    <lineage>
        <taxon>Bacteria</taxon>
        <taxon>Pseudomonadati</taxon>
        <taxon>Pseudomonadota</taxon>
        <taxon>Gammaproteobacteria</taxon>
        <taxon>Enterobacterales</taxon>
        <taxon>Enterobacteriaceae</taxon>
        <taxon>Salmonella</taxon>
    </lineage>
</organism>
<protein>
    <recommendedName>
        <fullName>High-affinity branched-chain amino acid transport ATP-binding protein LivF</fullName>
    </recommendedName>
    <alternativeName>
        <fullName>LIV-I protein F</fullName>
    </alternativeName>
</protein>
<sequence>MEKTMLTFEKVSAHYGKIQALHDVSLHINQGEIVTLIGANGAGKTTLLGTLCGDPRASSGRVVFDGKDITDWQTAKIMREAVAIVPEGRRVFSRMTVEENLAMGGFFAERDRFQERIKWVYELFPRLHERRIQRAGTMSGGEQQMLAIGRALMSQPRLLLLDEPSLGLAPIIIQQIFDTIEQLREQGMTIFLVEQNANQALKLADRGYVLENGHVVLSDTGDALLANEAVRSAYLGG</sequence>
<gene>
    <name type="primary">livF</name>
    <name type="synonym">livG</name>
    <name type="ordered locus">STY4252</name>
    <name type="ordered locus">t3962</name>
</gene>
<feature type="chain" id="PRO_0000092402" description="High-affinity branched-chain amino acid transport ATP-binding protein LivF">
    <location>
        <begin position="1"/>
        <end position="237"/>
    </location>
</feature>
<feature type="domain" description="ABC transporter" evidence="2">
    <location>
        <begin position="6"/>
        <end position="237"/>
    </location>
</feature>
<feature type="binding site" evidence="2">
    <location>
        <begin position="38"/>
        <end position="45"/>
    </location>
    <ligand>
        <name>ATP</name>
        <dbReference type="ChEBI" id="CHEBI:30616"/>
    </ligand>
</feature>
<accession>P0A192</accession>
<accession>P30294</accession>
<comment type="function">
    <text evidence="1">Component of the high-affinity branched-chain amino acid transport system.</text>
</comment>
<comment type="similarity">
    <text evidence="3">Belongs to the ABC transporter superfamily.</text>
</comment>
<keyword id="KW-0029">Amino-acid transport</keyword>
<keyword id="KW-0067">ATP-binding</keyword>
<keyword id="KW-0547">Nucleotide-binding</keyword>
<keyword id="KW-0813">Transport</keyword>
<proteinExistence type="inferred from homology"/>
<dbReference type="EMBL" id="AL513382">
    <property type="protein sequence ID" value="CAD08070.1"/>
    <property type="molecule type" value="Genomic_DNA"/>
</dbReference>
<dbReference type="EMBL" id="AE014613">
    <property type="protein sequence ID" value="AAO71432.1"/>
    <property type="molecule type" value="Genomic_DNA"/>
</dbReference>
<dbReference type="RefSeq" id="NP_458360.1">
    <property type="nucleotide sequence ID" value="NC_003198.1"/>
</dbReference>
<dbReference type="RefSeq" id="WP_000416114.1">
    <property type="nucleotide sequence ID" value="NZ_WSUR01000001.1"/>
</dbReference>
<dbReference type="SMR" id="P0A192"/>
<dbReference type="STRING" id="220341.gene:17588083"/>
<dbReference type="KEGG" id="stt:t3962"/>
<dbReference type="KEGG" id="sty:STY4252"/>
<dbReference type="PATRIC" id="fig|220341.7.peg.4342"/>
<dbReference type="eggNOG" id="COG0410">
    <property type="taxonomic scope" value="Bacteria"/>
</dbReference>
<dbReference type="HOGENOM" id="CLU_000604_1_2_6"/>
<dbReference type="OMA" id="IMMQKIM"/>
<dbReference type="Proteomes" id="UP000000541">
    <property type="component" value="Chromosome"/>
</dbReference>
<dbReference type="Proteomes" id="UP000002670">
    <property type="component" value="Chromosome"/>
</dbReference>
<dbReference type="GO" id="GO:0005524">
    <property type="term" value="F:ATP binding"/>
    <property type="evidence" value="ECO:0007669"/>
    <property type="project" value="UniProtKB-KW"/>
</dbReference>
<dbReference type="GO" id="GO:0016887">
    <property type="term" value="F:ATP hydrolysis activity"/>
    <property type="evidence" value="ECO:0007669"/>
    <property type="project" value="InterPro"/>
</dbReference>
<dbReference type="GO" id="GO:0015658">
    <property type="term" value="F:branched-chain amino acid transmembrane transporter activity"/>
    <property type="evidence" value="ECO:0007669"/>
    <property type="project" value="InterPro"/>
</dbReference>
<dbReference type="GO" id="GO:0015807">
    <property type="term" value="P:L-amino acid transport"/>
    <property type="evidence" value="ECO:0007669"/>
    <property type="project" value="TreeGrafter"/>
</dbReference>
<dbReference type="CDD" id="cd03224">
    <property type="entry name" value="ABC_TM1139_LivF_branched"/>
    <property type="match status" value="1"/>
</dbReference>
<dbReference type="FunFam" id="3.40.50.300:FF:000341">
    <property type="entry name" value="High-affinity branched-chain amino acid transport ATP-binding protein"/>
    <property type="match status" value="1"/>
</dbReference>
<dbReference type="Gene3D" id="3.40.50.300">
    <property type="entry name" value="P-loop containing nucleotide triphosphate hydrolases"/>
    <property type="match status" value="1"/>
</dbReference>
<dbReference type="InterPro" id="IPR003593">
    <property type="entry name" value="AAA+_ATPase"/>
</dbReference>
<dbReference type="InterPro" id="IPR030660">
    <property type="entry name" value="ABC_branched_ATPase_LivF/BraG"/>
</dbReference>
<dbReference type="InterPro" id="IPR003439">
    <property type="entry name" value="ABC_transporter-like_ATP-bd"/>
</dbReference>
<dbReference type="InterPro" id="IPR017871">
    <property type="entry name" value="ABC_transporter-like_CS"/>
</dbReference>
<dbReference type="InterPro" id="IPR052156">
    <property type="entry name" value="BCAA_Transport_ATP-bd_LivF"/>
</dbReference>
<dbReference type="InterPro" id="IPR027417">
    <property type="entry name" value="P-loop_NTPase"/>
</dbReference>
<dbReference type="NCBIfam" id="NF008626">
    <property type="entry name" value="PRK11614.1"/>
    <property type="match status" value="1"/>
</dbReference>
<dbReference type="PANTHER" id="PTHR43820">
    <property type="entry name" value="HIGH-AFFINITY BRANCHED-CHAIN AMINO ACID TRANSPORT ATP-BINDING PROTEIN LIVF"/>
    <property type="match status" value="1"/>
</dbReference>
<dbReference type="PANTHER" id="PTHR43820:SF4">
    <property type="entry name" value="HIGH-AFFINITY BRANCHED-CHAIN AMINO ACID TRANSPORT ATP-BINDING PROTEIN LIVF"/>
    <property type="match status" value="1"/>
</dbReference>
<dbReference type="Pfam" id="PF00005">
    <property type="entry name" value="ABC_tran"/>
    <property type="match status" value="1"/>
</dbReference>
<dbReference type="PIRSF" id="PIRSF039137">
    <property type="entry name" value="ABC_branched_ATPase"/>
    <property type="match status" value="1"/>
</dbReference>
<dbReference type="SMART" id="SM00382">
    <property type="entry name" value="AAA"/>
    <property type="match status" value="1"/>
</dbReference>
<dbReference type="SUPFAM" id="SSF52540">
    <property type="entry name" value="P-loop containing nucleoside triphosphate hydrolases"/>
    <property type="match status" value="1"/>
</dbReference>
<dbReference type="PROSITE" id="PS00211">
    <property type="entry name" value="ABC_TRANSPORTER_1"/>
    <property type="match status" value="1"/>
</dbReference>
<dbReference type="PROSITE" id="PS50893">
    <property type="entry name" value="ABC_TRANSPORTER_2"/>
    <property type="match status" value="1"/>
</dbReference>
<reference key="1">
    <citation type="journal article" date="2001" name="Nature">
        <title>Complete genome sequence of a multiple drug resistant Salmonella enterica serovar Typhi CT18.</title>
        <authorList>
            <person name="Parkhill J."/>
            <person name="Dougan G."/>
            <person name="James K.D."/>
            <person name="Thomson N.R."/>
            <person name="Pickard D."/>
            <person name="Wain J."/>
            <person name="Churcher C.M."/>
            <person name="Mungall K.L."/>
            <person name="Bentley S.D."/>
            <person name="Holden M.T.G."/>
            <person name="Sebaihia M."/>
            <person name="Baker S."/>
            <person name="Basham D."/>
            <person name="Brooks K."/>
            <person name="Chillingworth T."/>
            <person name="Connerton P."/>
            <person name="Cronin A."/>
            <person name="Davis P."/>
            <person name="Davies R.M."/>
            <person name="Dowd L."/>
            <person name="White N."/>
            <person name="Farrar J."/>
            <person name="Feltwell T."/>
            <person name="Hamlin N."/>
            <person name="Haque A."/>
            <person name="Hien T.T."/>
            <person name="Holroyd S."/>
            <person name="Jagels K."/>
            <person name="Krogh A."/>
            <person name="Larsen T.S."/>
            <person name="Leather S."/>
            <person name="Moule S."/>
            <person name="O'Gaora P."/>
            <person name="Parry C."/>
            <person name="Quail M.A."/>
            <person name="Rutherford K.M."/>
            <person name="Simmonds M."/>
            <person name="Skelton J."/>
            <person name="Stevens K."/>
            <person name="Whitehead S."/>
            <person name="Barrell B.G."/>
        </authorList>
    </citation>
    <scope>NUCLEOTIDE SEQUENCE [LARGE SCALE GENOMIC DNA]</scope>
    <source>
        <strain>CT18</strain>
    </source>
</reference>
<reference key="2">
    <citation type="journal article" date="2003" name="J. Bacteriol.">
        <title>Comparative genomics of Salmonella enterica serovar Typhi strains Ty2 and CT18.</title>
        <authorList>
            <person name="Deng W."/>
            <person name="Liou S.-R."/>
            <person name="Plunkett G. III"/>
            <person name="Mayhew G.F."/>
            <person name="Rose D.J."/>
            <person name="Burland V."/>
            <person name="Kodoyianni V."/>
            <person name="Schwartz D.C."/>
            <person name="Blattner F.R."/>
        </authorList>
    </citation>
    <scope>NUCLEOTIDE SEQUENCE [LARGE SCALE GENOMIC DNA]</scope>
    <source>
        <strain>ATCC 700931 / Ty2</strain>
    </source>
</reference>
<evidence type="ECO:0000250" key="1"/>
<evidence type="ECO:0000255" key="2">
    <source>
        <dbReference type="PROSITE-ProRule" id="PRU00434"/>
    </source>
</evidence>
<evidence type="ECO:0000305" key="3"/>